<protein>
    <recommendedName>
        <fullName>Floricaula/leafy homolog 2</fullName>
    </recommendedName>
    <alternativeName>
        <fullName>NFL2</fullName>
    </alternativeName>
</protein>
<organism>
    <name type="scientific">Nicotiana tabacum</name>
    <name type="common">Common tobacco</name>
    <dbReference type="NCBI Taxonomy" id="4097"/>
    <lineage>
        <taxon>Eukaryota</taxon>
        <taxon>Viridiplantae</taxon>
        <taxon>Streptophyta</taxon>
        <taxon>Embryophyta</taxon>
        <taxon>Tracheophyta</taxon>
        <taxon>Spermatophyta</taxon>
        <taxon>Magnoliopsida</taxon>
        <taxon>eudicotyledons</taxon>
        <taxon>Gunneridae</taxon>
        <taxon>Pentapetalae</taxon>
        <taxon>asterids</taxon>
        <taxon>lamiids</taxon>
        <taxon>Solanales</taxon>
        <taxon>Solanaceae</taxon>
        <taxon>Nicotianoideae</taxon>
        <taxon>Nicotianeae</taxon>
        <taxon>Nicotiana</taxon>
    </lineage>
</organism>
<comment type="function">
    <text>Probable transcription factor that act to specify determinacy in the progenitor cells for both flowers and leaves.</text>
</comment>
<comment type="subcellular location">
    <subcellularLocation>
        <location evidence="3">Nucleus</location>
    </subcellularLocation>
</comment>
<comment type="tissue specificity">
    <text>Expressed in floral meristems and in indeterminate vegetative meristems.</text>
</comment>
<comment type="similarity">
    <text evidence="3">Belongs to the FLO/LFY family.</text>
</comment>
<name>FL2_TOBAC</name>
<accession>Q40505</accession>
<dbReference type="EMBL" id="U16174">
    <property type="protein sequence ID" value="AAC48986.1"/>
    <property type="molecule type" value="Genomic_DNA"/>
</dbReference>
<dbReference type="EMBL" id="U15799">
    <property type="protein sequence ID" value="AAC48986.1"/>
    <property type="status" value="JOINED"/>
    <property type="molecule type" value="Genomic_DNA"/>
</dbReference>
<dbReference type="EMBL" id="U16173">
    <property type="protein sequence ID" value="AAC48986.1"/>
    <property type="status" value="JOINED"/>
    <property type="molecule type" value="Genomic_DNA"/>
</dbReference>
<dbReference type="PIR" id="T03243">
    <property type="entry name" value="T03243"/>
</dbReference>
<dbReference type="SMR" id="Q40505"/>
<dbReference type="STRING" id="4097.Q40505"/>
<dbReference type="PaxDb" id="4097-Q40505"/>
<dbReference type="GeneID" id="107774346"/>
<dbReference type="KEGG" id="nta:107774346"/>
<dbReference type="OMA" id="KHSGAGY"/>
<dbReference type="OrthoDB" id="1875842at2759"/>
<dbReference type="Proteomes" id="UP000084051">
    <property type="component" value="Unplaced"/>
</dbReference>
<dbReference type="GO" id="GO:0005634">
    <property type="term" value="C:nucleus"/>
    <property type="evidence" value="ECO:0007669"/>
    <property type="project" value="UniProtKB-SubCell"/>
</dbReference>
<dbReference type="GO" id="GO:0003677">
    <property type="term" value="F:DNA binding"/>
    <property type="evidence" value="ECO:0007669"/>
    <property type="project" value="UniProtKB-KW"/>
</dbReference>
<dbReference type="GO" id="GO:0006355">
    <property type="term" value="P:regulation of DNA-templated transcription"/>
    <property type="evidence" value="ECO:0007669"/>
    <property type="project" value="InterPro"/>
</dbReference>
<dbReference type="Gene3D" id="1.10.4180.10">
    <property type="entry name" value="Protein LEAFY"/>
    <property type="match status" value="1"/>
</dbReference>
<dbReference type="InterPro" id="IPR035209">
    <property type="entry name" value="FLO/LFY_C"/>
</dbReference>
<dbReference type="InterPro" id="IPR002910">
    <property type="entry name" value="FLO_LFY"/>
</dbReference>
<dbReference type="InterPro" id="IPR038276">
    <property type="entry name" value="Floricaula/leafy_C_sf"/>
</dbReference>
<dbReference type="InterPro" id="IPR035079">
    <property type="entry name" value="LFY_SAM"/>
</dbReference>
<dbReference type="PANTHER" id="PTHR36079">
    <property type="entry name" value="PROTEIN LEAFY"/>
    <property type="match status" value="1"/>
</dbReference>
<dbReference type="PANTHER" id="PTHR36079:SF1">
    <property type="entry name" value="PROTEIN LEAFY"/>
    <property type="match status" value="1"/>
</dbReference>
<dbReference type="Pfam" id="PF17538">
    <property type="entry name" value="C_LFY_FLO"/>
    <property type="match status" value="1"/>
</dbReference>
<dbReference type="Pfam" id="PF01698">
    <property type="entry name" value="SAM_LFY"/>
    <property type="match status" value="1"/>
</dbReference>
<keyword id="KW-0010">Activator</keyword>
<keyword id="KW-0217">Developmental protein</keyword>
<keyword id="KW-0238">DNA-binding</keyword>
<keyword id="KW-0539">Nucleus</keyword>
<keyword id="KW-1185">Reference proteome</keyword>
<keyword id="KW-0804">Transcription</keyword>
<keyword id="KW-0805">Transcription regulation</keyword>
<gene>
    <name type="primary">FL2</name>
</gene>
<proteinExistence type="evidence at transcript level"/>
<sequence>MDPEAFSASLFKWDPRGAMPPPTRLLEAAVAPPPPPPALPPPQPLSAAYSIKTRELGGLEELFQAYGIRYYTAAKIAELGFTVNTLLDMKDEELDDMMNSLSQIFRWELLVGERYGIKAAIRAERRRLEEEELRRRGHLLSDGGTNALDALSQEGLSEEPVQQQEREAVGSGGGGTTWEVVAAAGGGRMKQRRRKKVVAAGREKRGGASAEEDEETEEGQEDDWNINDASGGISERQREHPFIVTEPGEVARGKKNGLDYLFHLYEQCRDFLIQVQNIAKERGEKCPTKVTNQVFRYAKKAGASYINKPKMRHYVHCYALHCLDEEASNALRRAFKERGENVGAWRQACYKPLVAIAARQGWDIDTIFNAHPRLAIWYVPTKLRQLCHSERSNAAAAAASSSVSGGGGGGDHLPHF</sequence>
<evidence type="ECO:0000250" key="1"/>
<evidence type="ECO:0000256" key="2">
    <source>
        <dbReference type="SAM" id="MobiDB-lite"/>
    </source>
</evidence>
<evidence type="ECO:0000305" key="3"/>
<feature type="chain" id="PRO_0000129157" description="Floricaula/leafy homolog 2">
    <location>
        <begin position="1"/>
        <end position="416"/>
    </location>
</feature>
<feature type="DNA-binding region" evidence="1">
    <location>
        <begin position="238"/>
        <end position="242"/>
    </location>
</feature>
<feature type="DNA-binding region" evidence="1">
    <location>
        <begin position="307"/>
        <end position="314"/>
    </location>
</feature>
<feature type="DNA-binding region" evidence="1">
    <location>
        <begin position="378"/>
        <end position="381"/>
    </location>
</feature>
<feature type="region of interest" description="Disordered" evidence="2">
    <location>
        <begin position="154"/>
        <end position="237"/>
    </location>
</feature>
<feature type="compositionally biased region" description="Acidic residues" evidence="2">
    <location>
        <begin position="210"/>
        <end position="225"/>
    </location>
</feature>
<feature type="site" description="Interaction with DNA" evidence="1">
    <location>
        <position position="285"/>
    </location>
</feature>
<feature type="site" description="Interaction with DNA" evidence="1">
    <location>
        <position position="292"/>
    </location>
</feature>
<feature type="site" description="Interaction with DNA" evidence="1">
    <location>
        <position position="296"/>
    </location>
</feature>
<feature type="site" description="Interaction with DNA" evidence="1">
    <location>
        <position position="343"/>
    </location>
</feature>
<reference key="1">
    <citation type="journal article" date="1995" name="Plant Cell">
        <title>NFL, the tobacco homolog of FLORICAULA and LEAFY, is transcriptionally expressed in both vegetative and floral meristems.</title>
        <authorList>
            <person name="Kelly A.J."/>
            <person name="Bonnlander M.B."/>
            <person name="Meeks-Wagner D.R."/>
        </authorList>
    </citation>
    <scope>NUCLEOTIDE SEQUENCE [GENOMIC DNA]</scope>
    <source>
        <strain>cv. Samsun</strain>
    </source>
</reference>